<gene>
    <name evidence="1" type="primary">rimP</name>
    <name type="ordered locus">SMU_417</name>
</gene>
<proteinExistence type="inferred from homology"/>
<keyword id="KW-0963">Cytoplasm</keyword>
<keyword id="KW-1185">Reference proteome</keyword>
<keyword id="KW-0690">Ribosome biogenesis</keyword>
<sequence>MCKEGNTIATLVDIVRPVVAPVIPKPFELVDIEYEKLGGNYVLSILVDKPEGITVEDTADLTDIISPLLDTIKPDPFPEQYMLEISSPGLERPLKTAQSLMNAVGHYINVSLYQAIDKVKVFEGDLTAFDGETLKMTYLDKTQQKTVTIPYKMVAKARLAVKL</sequence>
<comment type="function">
    <text evidence="1">Required for maturation of 30S ribosomal subunits.</text>
</comment>
<comment type="subcellular location">
    <subcellularLocation>
        <location evidence="1">Cytoplasm</location>
    </subcellularLocation>
</comment>
<comment type="similarity">
    <text evidence="1">Belongs to the RimP family.</text>
</comment>
<accession>Q8DVQ3</accession>
<dbReference type="EMBL" id="AE014133">
    <property type="protein sequence ID" value="AAN58171.1"/>
    <property type="molecule type" value="Genomic_DNA"/>
</dbReference>
<dbReference type="RefSeq" id="NP_720865.1">
    <property type="nucleotide sequence ID" value="NC_004350.2"/>
</dbReference>
<dbReference type="RefSeq" id="WP_002262604.1">
    <property type="nucleotide sequence ID" value="NC_004350.2"/>
</dbReference>
<dbReference type="SMR" id="Q8DVQ3"/>
<dbReference type="STRING" id="210007.SMU_417"/>
<dbReference type="KEGG" id="smu:SMU_417"/>
<dbReference type="PATRIC" id="fig|210007.7.peg.367"/>
<dbReference type="eggNOG" id="COG0779">
    <property type="taxonomic scope" value="Bacteria"/>
</dbReference>
<dbReference type="HOGENOM" id="CLU_070525_2_0_9"/>
<dbReference type="OrthoDB" id="9805006at2"/>
<dbReference type="PhylomeDB" id="Q8DVQ3"/>
<dbReference type="Proteomes" id="UP000002512">
    <property type="component" value="Chromosome"/>
</dbReference>
<dbReference type="GO" id="GO:0005829">
    <property type="term" value="C:cytosol"/>
    <property type="evidence" value="ECO:0007669"/>
    <property type="project" value="TreeGrafter"/>
</dbReference>
<dbReference type="GO" id="GO:0000028">
    <property type="term" value="P:ribosomal small subunit assembly"/>
    <property type="evidence" value="ECO:0007669"/>
    <property type="project" value="TreeGrafter"/>
</dbReference>
<dbReference type="GO" id="GO:0006412">
    <property type="term" value="P:translation"/>
    <property type="evidence" value="ECO:0007669"/>
    <property type="project" value="TreeGrafter"/>
</dbReference>
<dbReference type="CDD" id="cd01734">
    <property type="entry name" value="YlxS_C"/>
    <property type="match status" value="1"/>
</dbReference>
<dbReference type="Gene3D" id="2.30.30.180">
    <property type="entry name" value="Ribosome maturation factor RimP, C-terminal domain"/>
    <property type="match status" value="1"/>
</dbReference>
<dbReference type="Gene3D" id="3.30.300.70">
    <property type="entry name" value="RimP-like superfamily, N-terminal"/>
    <property type="match status" value="1"/>
</dbReference>
<dbReference type="HAMAP" id="MF_01077">
    <property type="entry name" value="RimP"/>
    <property type="match status" value="1"/>
</dbReference>
<dbReference type="InterPro" id="IPR003728">
    <property type="entry name" value="Ribosome_maturation_RimP"/>
</dbReference>
<dbReference type="InterPro" id="IPR028998">
    <property type="entry name" value="RimP_C"/>
</dbReference>
<dbReference type="InterPro" id="IPR036847">
    <property type="entry name" value="RimP_C_sf"/>
</dbReference>
<dbReference type="InterPro" id="IPR028989">
    <property type="entry name" value="RimP_N"/>
</dbReference>
<dbReference type="InterPro" id="IPR035956">
    <property type="entry name" value="RimP_N_sf"/>
</dbReference>
<dbReference type="NCBIfam" id="NF000928">
    <property type="entry name" value="PRK00092.1-2"/>
    <property type="match status" value="1"/>
</dbReference>
<dbReference type="PANTHER" id="PTHR33867">
    <property type="entry name" value="RIBOSOME MATURATION FACTOR RIMP"/>
    <property type="match status" value="1"/>
</dbReference>
<dbReference type="PANTHER" id="PTHR33867:SF1">
    <property type="entry name" value="RIBOSOME MATURATION FACTOR RIMP"/>
    <property type="match status" value="1"/>
</dbReference>
<dbReference type="Pfam" id="PF17384">
    <property type="entry name" value="DUF150_C"/>
    <property type="match status" value="1"/>
</dbReference>
<dbReference type="Pfam" id="PF02576">
    <property type="entry name" value="RimP_N"/>
    <property type="match status" value="1"/>
</dbReference>
<dbReference type="SUPFAM" id="SSF74942">
    <property type="entry name" value="YhbC-like, C-terminal domain"/>
    <property type="match status" value="1"/>
</dbReference>
<dbReference type="SUPFAM" id="SSF75420">
    <property type="entry name" value="YhbC-like, N-terminal domain"/>
    <property type="match status" value="1"/>
</dbReference>
<feature type="chain" id="PRO_0000181933" description="Ribosome maturation factor RimP">
    <location>
        <begin position="1"/>
        <end position="163"/>
    </location>
</feature>
<reference key="1">
    <citation type="journal article" date="2002" name="Proc. Natl. Acad. Sci. U.S.A.">
        <title>Genome sequence of Streptococcus mutans UA159, a cariogenic dental pathogen.</title>
        <authorList>
            <person name="Ajdic D.J."/>
            <person name="McShan W.M."/>
            <person name="McLaughlin R.E."/>
            <person name="Savic G."/>
            <person name="Chang J."/>
            <person name="Carson M.B."/>
            <person name="Primeaux C."/>
            <person name="Tian R."/>
            <person name="Kenton S."/>
            <person name="Jia H.G."/>
            <person name="Lin S.P."/>
            <person name="Qian Y."/>
            <person name="Li S."/>
            <person name="Zhu H."/>
            <person name="Najar F.Z."/>
            <person name="Lai H."/>
            <person name="White J."/>
            <person name="Roe B.A."/>
            <person name="Ferretti J.J."/>
        </authorList>
    </citation>
    <scope>NUCLEOTIDE SEQUENCE [LARGE SCALE GENOMIC DNA]</scope>
    <source>
        <strain>ATCC 700610 / UA159</strain>
    </source>
</reference>
<evidence type="ECO:0000255" key="1">
    <source>
        <dbReference type="HAMAP-Rule" id="MF_01077"/>
    </source>
</evidence>
<protein>
    <recommendedName>
        <fullName evidence="1">Ribosome maturation factor RimP</fullName>
    </recommendedName>
</protein>
<organism>
    <name type="scientific">Streptococcus mutans serotype c (strain ATCC 700610 / UA159)</name>
    <dbReference type="NCBI Taxonomy" id="210007"/>
    <lineage>
        <taxon>Bacteria</taxon>
        <taxon>Bacillati</taxon>
        <taxon>Bacillota</taxon>
        <taxon>Bacilli</taxon>
        <taxon>Lactobacillales</taxon>
        <taxon>Streptococcaceae</taxon>
        <taxon>Streptococcus</taxon>
    </lineage>
</organism>
<name>RIMP_STRMU</name>